<sequence>MEEVFQNETIKQILAKYRRIWAIGHAQSVLGWDLEVNMPKEGILERSVAQGELSVLSHELLLHPEFVNLVEKAKGLENLNEYERGIVRVLDRSIRIARAFPPEFIREVSETTSLATKAWEEAKAKDDFSKFEPWLDKIISLAKRAAEYLGYEEEPYDALLDLYEEGLRTRDVEKMFEVLEKKLKPLLDKILEEGKVPREHPLEKEKYEREWMERVNLWILQKFGFPLGTRARLDVSAHPFTTEFGIRDVRITTRYEGYDFRRTILSTVHEFGHALYELQQDERFMFTPIAGGVSLGIHESQSRFWENIIGRSKEFVELIYPVLKENLPFMSNYTPEDVYLYFNIVRPDFIRTEADVVTYNFHILLRFKLERLMVSEEIKAKDLPEMWNDEMERLLGIRPRKYSEGILQDIHWAHGSIGYFPTYTIGTLLSAQLYYHIKKDIPDFEEKVAKAEFDPIKAWLREKIHRWGSIYPPKELLKKAIGEDMDAEYFVRWVKEKYL</sequence>
<dbReference type="EC" id="3.4.17.19"/>
<dbReference type="EMBL" id="AE009950">
    <property type="protein sequence ID" value="AAL80580.1"/>
    <property type="molecule type" value="Genomic_DNA"/>
</dbReference>
<dbReference type="RefSeq" id="WP_011011573.1">
    <property type="nucleotide sequence ID" value="NZ_CP023154.1"/>
</dbReference>
<dbReference type="PDB" id="1K9X">
    <property type="method" value="X-ray"/>
    <property type="resolution" value="2.30 A"/>
    <property type="chains" value="A/B/C/D=1-499"/>
</dbReference>
<dbReference type="PDB" id="1KA2">
    <property type="method" value="X-ray"/>
    <property type="resolution" value="2.20 A"/>
    <property type="chains" value="A=1-499"/>
</dbReference>
<dbReference type="PDB" id="1KA4">
    <property type="method" value="X-ray"/>
    <property type="resolution" value="3.00 A"/>
    <property type="chains" value="A=1-499"/>
</dbReference>
<dbReference type="PDBsum" id="1K9X"/>
<dbReference type="PDBsum" id="1KA2"/>
<dbReference type="PDBsum" id="1KA4"/>
<dbReference type="SMR" id="Q8U3L0"/>
<dbReference type="STRING" id="186497.PF0456"/>
<dbReference type="MEROPS" id="M32.002"/>
<dbReference type="PaxDb" id="186497-PF0456"/>
<dbReference type="KEGG" id="pfu:PF0456"/>
<dbReference type="PATRIC" id="fig|186497.12.peg.480"/>
<dbReference type="eggNOG" id="arCOG04247">
    <property type="taxonomic scope" value="Archaea"/>
</dbReference>
<dbReference type="HOGENOM" id="CLU_032916_1_1_2"/>
<dbReference type="OrthoDB" id="7244at2157"/>
<dbReference type="PhylomeDB" id="Q8U3L0"/>
<dbReference type="BRENDA" id="3.4.17.B5">
    <property type="organism ID" value="5243"/>
</dbReference>
<dbReference type="EvolutionaryTrace" id="Q8U3L0"/>
<dbReference type="Proteomes" id="UP000001013">
    <property type="component" value="Chromosome"/>
</dbReference>
<dbReference type="GO" id="GO:0050897">
    <property type="term" value="F:cobalt ion binding"/>
    <property type="evidence" value="ECO:0000314"/>
    <property type="project" value="UniProtKB"/>
</dbReference>
<dbReference type="GO" id="GO:0004181">
    <property type="term" value="F:metallocarboxypeptidase activity"/>
    <property type="evidence" value="ECO:0000314"/>
    <property type="project" value="UniProtKB"/>
</dbReference>
<dbReference type="GO" id="GO:0006508">
    <property type="term" value="P:proteolysis"/>
    <property type="evidence" value="ECO:0000314"/>
    <property type="project" value="UniProtKB"/>
</dbReference>
<dbReference type="CDD" id="cd06460">
    <property type="entry name" value="M32_Taq"/>
    <property type="match status" value="1"/>
</dbReference>
<dbReference type="FunFam" id="1.10.1370.30:FF:000003">
    <property type="entry name" value="Thermostable carboxypeptidase 1"/>
    <property type="match status" value="1"/>
</dbReference>
<dbReference type="Gene3D" id="1.10.1370.30">
    <property type="match status" value="1"/>
</dbReference>
<dbReference type="InterPro" id="IPR001333">
    <property type="entry name" value="Peptidase_M32_Taq"/>
</dbReference>
<dbReference type="PANTHER" id="PTHR34217:SF1">
    <property type="entry name" value="CARBOXYPEPTIDASE 1"/>
    <property type="match status" value="1"/>
</dbReference>
<dbReference type="PANTHER" id="PTHR34217">
    <property type="entry name" value="METAL-DEPENDENT CARBOXYPEPTIDASE"/>
    <property type="match status" value="1"/>
</dbReference>
<dbReference type="Pfam" id="PF02074">
    <property type="entry name" value="Peptidase_M32"/>
    <property type="match status" value="1"/>
</dbReference>
<dbReference type="PIRSF" id="PIRSF006615">
    <property type="entry name" value="Zn_crbxpep_Taq"/>
    <property type="match status" value="1"/>
</dbReference>
<dbReference type="PRINTS" id="PR00998">
    <property type="entry name" value="CRBOXYPTASET"/>
</dbReference>
<dbReference type="SUPFAM" id="SSF55486">
    <property type="entry name" value="Metalloproteases ('zincins'), catalytic domain"/>
    <property type="match status" value="1"/>
</dbReference>
<dbReference type="PROSITE" id="PS52034">
    <property type="entry name" value="PEPTIDASE_M32"/>
    <property type="match status" value="1"/>
</dbReference>
<dbReference type="PROSITE" id="PS00142">
    <property type="entry name" value="ZINC_PROTEASE"/>
    <property type="match status" value="1"/>
</dbReference>
<name>CBP1_PYRFU</name>
<reference key="1">
    <citation type="journal article" date="1999" name="Genetics">
        <title>Divergence of the hyperthermophilic archaea Pyrococcus furiosus and P. horikoshii inferred from complete genomic sequences.</title>
        <authorList>
            <person name="Maeder D.L."/>
            <person name="Weiss R.B."/>
            <person name="Dunn D.M."/>
            <person name="Cherry J.L."/>
            <person name="Gonzalez J.M."/>
            <person name="DiRuggiero J."/>
            <person name="Robb F.T."/>
        </authorList>
    </citation>
    <scope>NUCLEOTIDE SEQUENCE [LARGE SCALE GENOMIC DNA]</scope>
    <source>
        <strain>ATCC 43587 / DSM 3638 / JCM 8422 / Vc1</strain>
    </source>
</reference>
<reference key="2">
    <citation type="journal article" date="1999" name="Protein Sci.">
        <title>Purification and characterization of a cobalt-activated carboxypeptidase from the hyperthermophilic archaeon Pyrococcus furiosus.</title>
        <authorList>
            <person name="Cheng T.C."/>
            <person name="Ramakrishnan V."/>
            <person name="Chan S.I."/>
        </authorList>
    </citation>
    <scope>PROTEIN SEQUENCE OF 1-30; 41-72 AND 480-495</scope>
    <scope>FUNCTION</scope>
    <scope>CATALYTIC ACTIVITY</scope>
    <scope>COFACTOR</scope>
    <scope>BIOPHYSICOCHEMICAL PROPERTIES</scope>
    <scope>SUBUNIT</scope>
    <scope>ACTIVITY REGULATION</scope>
    <source>
        <strain>ATCC 43587 / DSM 3638 / JCM 8422 / Vc1</strain>
    </source>
</reference>
<reference key="3">
    <citation type="journal article" date="2002" name="Structure">
        <title>Crystal structure of a novel carboxypeptidase from the hyperthermophilic archaeon Pyrococcus furiosus.</title>
        <authorList>
            <person name="Arndt J.W."/>
            <person name="Hao B."/>
            <person name="Ramakrishnan V."/>
            <person name="Cheng T."/>
            <person name="Chan S.I."/>
            <person name="Chan M.K."/>
        </authorList>
    </citation>
    <scope>X-RAY CRYSTALLOGRAPHY (2.20 ANGSTROMS) IN COMPLEX WITH MAGNESIUM AND LEAD IONS</scope>
    <scope>SUBUNIT</scope>
    <scope>COFACTOR</scope>
</reference>
<evidence type="ECO:0000255" key="1">
    <source>
        <dbReference type="PROSITE-ProRule" id="PRU01378"/>
    </source>
</evidence>
<evidence type="ECO:0000269" key="2">
    <source>
    </source>
</evidence>
<evidence type="ECO:0000269" key="3">
    <source>
    </source>
</evidence>
<evidence type="ECO:0000305" key="4"/>
<evidence type="ECO:0007829" key="5">
    <source>
        <dbReference type="PDB" id="1KA2"/>
    </source>
</evidence>
<protein>
    <recommendedName>
        <fullName>Thermostable carboxypeptidase 1</fullName>
        <ecNumber>3.4.17.19</ecNumber>
    </recommendedName>
    <alternativeName>
        <fullName>Carboxypeptidase Pfu</fullName>
        <shortName>PfuCP</shortName>
    </alternativeName>
</protein>
<accession>Q8U3L0</accession>
<proteinExistence type="evidence at protein level"/>
<keyword id="KW-0002">3D-structure</keyword>
<keyword id="KW-0121">Carboxypeptidase</keyword>
<keyword id="KW-0170">Cobalt</keyword>
<keyword id="KW-0903">Direct protein sequencing</keyword>
<keyword id="KW-0378">Hydrolase</keyword>
<keyword id="KW-0479">Metal-binding</keyword>
<keyword id="KW-0482">Metalloprotease</keyword>
<keyword id="KW-0645">Protease</keyword>
<keyword id="KW-1185">Reference proteome</keyword>
<gene>
    <name type="ordered locus">PF0456</name>
</gene>
<organism>
    <name type="scientific">Pyrococcus furiosus (strain ATCC 43587 / DSM 3638 / JCM 8422 / Vc1)</name>
    <dbReference type="NCBI Taxonomy" id="186497"/>
    <lineage>
        <taxon>Archaea</taxon>
        <taxon>Methanobacteriati</taxon>
        <taxon>Methanobacteriota</taxon>
        <taxon>Thermococci</taxon>
        <taxon>Thermococcales</taxon>
        <taxon>Thermococcaceae</taxon>
        <taxon>Pyrococcus</taxon>
    </lineage>
</organism>
<comment type="function">
    <text evidence="2">Broad specificity carboxypetidase that releases amino acids sequentially from the C-terminus, including neutral, aromatic, polar and basic residues, but not Pro, Gly, Asp and Glu.</text>
</comment>
<comment type="catalytic activity">
    <reaction evidence="1 2">
        <text>Release of a C-terminal amino acid with broad specificity, except for -Pro.</text>
        <dbReference type="EC" id="3.4.17.19"/>
    </reaction>
</comment>
<comment type="cofactor">
    <cofactor evidence="2 3">
        <name>Co(2+)</name>
        <dbReference type="ChEBI" id="CHEBI:48828"/>
    </cofactor>
    <cofactor evidence="2 3">
        <name>Mn(2+)</name>
        <dbReference type="ChEBI" id="CHEBI:29035"/>
    </cofactor>
    <text evidence="2 3">Binds 1 cobalt ion per subunit. Can also utilize Mn(2+) (in vitro). Is not active with zinc ions.</text>
</comment>
<comment type="activity regulation">
    <text evidence="2">EDTA and DTT reversibly abolish carboxypeptidase activity.</text>
</comment>
<comment type="biophysicochemical properties">
    <phDependence>
        <text evidence="2">Optimum pH is 6.2-6.6.</text>
    </phDependence>
    <temperatureDependence>
        <text evidence="2">Optimum temperature is 90-100 degrees Celsius.</text>
    </temperatureDependence>
</comment>
<comment type="subunit">
    <text evidence="2 3">Homodimer.</text>
</comment>
<comment type="similarity">
    <text evidence="1 4">Belongs to the peptidase M32 family.</text>
</comment>
<feature type="chain" id="PRO_0000428834" description="Thermostable carboxypeptidase 1">
    <location>
        <begin position="1"/>
        <end position="499"/>
    </location>
</feature>
<feature type="domain" description="Peptidase M32" evidence="1">
    <location>
        <begin position="6"/>
        <end position="499"/>
    </location>
</feature>
<feature type="short sequence motif" description="HPF" evidence="1">
    <location>
        <begin position="238"/>
        <end position="240"/>
    </location>
</feature>
<feature type="short sequence motif" description="DXRXT" evidence="1">
    <location>
        <begin position="248"/>
        <end position="252"/>
    </location>
</feature>
<feature type="short sequence motif" description="HEXXH" evidence="1">
    <location>
        <begin position="269"/>
        <end position="273"/>
    </location>
</feature>
<feature type="short sequence motif" description="HES/GQ" evidence="1">
    <location>
        <begin position="298"/>
        <end position="301"/>
    </location>
</feature>
<feature type="short sequence motif" description="I/NRXXA/SD" evidence="1">
    <location>
        <begin position="350"/>
        <end position="355"/>
    </location>
</feature>
<feature type="short sequence motif" description="GXXQDXHW" evidence="1">
    <location>
        <begin position="405"/>
        <end position="412"/>
    </location>
</feature>
<feature type="active site" description="Proton donor/acceptor" evidence="1">
    <location>
        <position position="270"/>
    </location>
</feature>
<feature type="binding site" evidence="3">
    <location>
        <position position="269"/>
    </location>
    <ligand>
        <name>Co(2+)</name>
        <dbReference type="ChEBI" id="CHEBI:48828"/>
        <note>catalytic</note>
    </ligand>
</feature>
<feature type="binding site" evidence="3">
    <location>
        <position position="273"/>
    </location>
    <ligand>
        <name>Co(2+)</name>
        <dbReference type="ChEBI" id="CHEBI:48828"/>
        <note>catalytic</note>
    </ligand>
</feature>
<feature type="binding site" evidence="3">
    <location>
        <position position="299"/>
    </location>
    <ligand>
        <name>Co(2+)</name>
        <dbReference type="ChEBI" id="CHEBI:48828"/>
        <note>catalytic</note>
    </ligand>
</feature>
<feature type="helix" evidence="5">
    <location>
        <begin position="8"/>
        <end position="36"/>
    </location>
</feature>
<feature type="helix" evidence="5">
    <location>
        <begin position="40"/>
        <end position="42"/>
    </location>
</feature>
<feature type="helix" evidence="5">
    <location>
        <begin position="43"/>
        <end position="61"/>
    </location>
</feature>
<feature type="helix" evidence="5">
    <location>
        <begin position="64"/>
        <end position="74"/>
    </location>
</feature>
<feature type="helix" evidence="5">
    <location>
        <begin position="81"/>
        <end position="99"/>
    </location>
</feature>
<feature type="helix" evidence="5">
    <location>
        <begin position="102"/>
        <end position="124"/>
    </location>
</feature>
<feature type="helix" evidence="5">
    <location>
        <begin position="128"/>
        <end position="130"/>
    </location>
</feature>
<feature type="helix" evidence="5">
    <location>
        <begin position="132"/>
        <end position="149"/>
    </location>
</feature>
<feature type="helix" evidence="5">
    <location>
        <begin position="155"/>
        <end position="163"/>
    </location>
</feature>
<feature type="helix" evidence="5">
    <location>
        <begin position="169"/>
        <end position="192"/>
    </location>
</feature>
<feature type="helix" evidence="5">
    <location>
        <begin position="201"/>
        <end position="203"/>
    </location>
</feature>
<feature type="helix" evidence="5">
    <location>
        <begin position="209"/>
        <end position="223"/>
    </location>
</feature>
<feature type="turn" evidence="5">
    <location>
        <begin position="228"/>
        <end position="230"/>
    </location>
</feature>
<feature type="strand" evidence="5">
    <location>
        <begin position="231"/>
        <end position="235"/>
    </location>
</feature>
<feature type="strand" evidence="5">
    <location>
        <begin position="241"/>
        <end position="245"/>
    </location>
</feature>
<feature type="strand" evidence="5">
    <location>
        <begin position="248"/>
        <end position="253"/>
    </location>
</feature>
<feature type="helix" evidence="5">
    <location>
        <begin position="261"/>
        <end position="278"/>
    </location>
</feature>
<feature type="helix" evidence="5">
    <location>
        <begin position="282"/>
        <end position="284"/>
    </location>
</feature>
<feature type="helix" evidence="5">
    <location>
        <begin position="295"/>
        <end position="306"/>
    </location>
</feature>
<feature type="turn" evidence="5">
    <location>
        <begin position="307"/>
        <end position="311"/>
    </location>
</feature>
<feature type="helix" evidence="5">
    <location>
        <begin position="313"/>
        <end position="326"/>
    </location>
</feature>
<feature type="helix" evidence="5">
    <location>
        <begin position="328"/>
        <end position="332"/>
    </location>
</feature>
<feature type="helix" evidence="5">
    <location>
        <begin position="335"/>
        <end position="342"/>
    </location>
</feature>
<feature type="helix" evidence="5">
    <location>
        <begin position="351"/>
        <end position="353"/>
    </location>
</feature>
<feature type="turn" evidence="5">
    <location>
        <begin position="356"/>
        <end position="358"/>
    </location>
</feature>
<feature type="helix" evidence="5">
    <location>
        <begin position="359"/>
        <end position="375"/>
    </location>
</feature>
<feature type="helix" evidence="5">
    <location>
        <begin position="380"/>
        <end position="382"/>
    </location>
</feature>
<feature type="helix" evidence="5">
    <location>
        <begin position="383"/>
        <end position="395"/>
    </location>
</feature>
<feature type="helix" evidence="5">
    <location>
        <begin position="402"/>
        <end position="404"/>
    </location>
</feature>
<feature type="turn" evidence="5">
    <location>
        <begin position="405"/>
        <end position="407"/>
    </location>
</feature>
<feature type="helix" evidence="5">
    <location>
        <begin position="411"/>
        <end position="414"/>
    </location>
</feature>
<feature type="helix" evidence="5">
    <location>
        <begin position="421"/>
        <end position="440"/>
    </location>
</feature>
<feature type="helix" evidence="5">
    <location>
        <begin position="444"/>
        <end position="450"/>
    </location>
</feature>
<feature type="helix" evidence="5">
    <location>
        <begin position="454"/>
        <end position="463"/>
    </location>
</feature>
<feature type="helix" evidence="5">
    <location>
        <begin position="465"/>
        <end position="467"/>
    </location>
</feature>
<feature type="helix" evidence="5">
    <location>
        <begin position="473"/>
        <end position="481"/>
    </location>
</feature>
<feature type="helix" evidence="5">
    <location>
        <begin position="488"/>
        <end position="498"/>
    </location>
</feature>